<evidence type="ECO:0000255" key="1">
    <source>
        <dbReference type="HAMAP-Rule" id="MF_01302"/>
    </source>
</evidence>
<evidence type="ECO:0000305" key="2"/>
<accession>Q3SSV2</accession>
<keyword id="KW-1185">Reference proteome</keyword>
<keyword id="KW-0687">Ribonucleoprotein</keyword>
<keyword id="KW-0689">Ribosomal protein</keyword>
<keyword id="KW-0694">RNA-binding</keyword>
<keyword id="KW-0699">rRNA-binding</keyword>
<sequence>MSTHDPISDLITRIRNAQMRSKPKVSTPGSKMRANVLEVLKSEGYIRGYASVEHSSGRSELEIELKYFDGEPVIREIERVSRPGRRVYASVKNLPRVNNGLGISVLSTPKGIMADHEARDANVGGEVLFTVF</sequence>
<gene>
    <name evidence="1" type="primary">rpsH</name>
    <name type="ordered locus">Nwi_1378</name>
</gene>
<comment type="function">
    <text evidence="1">One of the primary rRNA binding proteins, it binds directly to 16S rRNA central domain where it helps coordinate assembly of the platform of the 30S subunit.</text>
</comment>
<comment type="subunit">
    <text evidence="1">Part of the 30S ribosomal subunit. Contacts proteins S5 and S12.</text>
</comment>
<comment type="similarity">
    <text evidence="1">Belongs to the universal ribosomal protein uS8 family.</text>
</comment>
<proteinExistence type="inferred from homology"/>
<organism>
    <name type="scientific">Nitrobacter winogradskyi (strain ATCC 25391 / DSM 10237 / CIP 104748 / NCIMB 11846 / Nb-255)</name>
    <dbReference type="NCBI Taxonomy" id="323098"/>
    <lineage>
        <taxon>Bacteria</taxon>
        <taxon>Pseudomonadati</taxon>
        <taxon>Pseudomonadota</taxon>
        <taxon>Alphaproteobacteria</taxon>
        <taxon>Hyphomicrobiales</taxon>
        <taxon>Nitrobacteraceae</taxon>
        <taxon>Nitrobacter</taxon>
    </lineage>
</organism>
<protein>
    <recommendedName>
        <fullName evidence="1">Small ribosomal subunit protein uS8</fullName>
    </recommendedName>
    <alternativeName>
        <fullName evidence="2">30S ribosomal protein S8</fullName>
    </alternativeName>
</protein>
<reference key="1">
    <citation type="journal article" date="2006" name="Appl. Environ. Microbiol.">
        <title>Genome sequence of the chemolithoautotrophic nitrite-oxidizing bacterium Nitrobacter winogradskyi Nb-255.</title>
        <authorList>
            <person name="Starkenburg S.R."/>
            <person name="Chain P.S.G."/>
            <person name="Sayavedra-Soto L.A."/>
            <person name="Hauser L."/>
            <person name="Land M.L."/>
            <person name="Larimer F.W."/>
            <person name="Malfatti S.A."/>
            <person name="Klotz M.G."/>
            <person name="Bottomley P.J."/>
            <person name="Arp D.J."/>
            <person name="Hickey W.J."/>
        </authorList>
    </citation>
    <scope>NUCLEOTIDE SEQUENCE [LARGE SCALE GENOMIC DNA]</scope>
    <source>
        <strain>ATCC 25391 / DSM 10237 / CIP 104748 / NCIMB 11846 / Nb-255</strain>
    </source>
</reference>
<feature type="chain" id="PRO_0000225876" description="Small ribosomal subunit protein uS8">
    <location>
        <begin position="1"/>
        <end position="132"/>
    </location>
</feature>
<name>RS8_NITWN</name>
<dbReference type="EMBL" id="CP000115">
    <property type="protein sequence ID" value="ABA04639.1"/>
    <property type="molecule type" value="Genomic_DNA"/>
</dbReference>
<dbReference type="RefSeq" id="WP_011314652.1">
    <property type="nucleotide sequence ID" value="NC_007406.1"/>
</dbReference>
<dbReference type="SMR" id="Q3SSV2"/>
<dbReference type="STRING" id="323098.Nwi_1378"/>
<dbReference type="KEGG" id="nwi:Nwi_1378"/>
<dbReference type="eggNOG" id="COG0096">
    <property type="taxonomic scope" value="Bacteria"/>
</dbReference>
<dbReference type="HOGENOM" id="CLU_098428_0_0_5"/>
<dbReference type="OrthoDB" id="9802617at2"/>
<dbReference type="Proteomes" id="UP000002531">
    <property type="component" value="Chromosome"/>
</dbReference>
<dbReference type="GO" id="GO:1990904">
    <property type="term" value="C:ribonucleoprotein complex"/>
    <property type="evidence" value="ECO:0007669"/>
    <property type="project" value="UniProtKB-KW"/>
</dbReference>
<dbReference type="GO" id="GO:0005840">
    <property type="term" value="C:ribosome"/>
    <property type="evidence" value="ECO:0007669"/>
    <property type="project" value="UniProtKB-KW"/>
</dbReference>
<dbReference type="GO" id="GO:0019843">
    <property type="term" value="F:rRNA binding"/>
    <property type="evidence" value="ECO:0007669"/>
    <property type="project" value="UniProtKB-UniRule"/>
</dbReference>
<dbReference type="GO" id="GO:0003735">
    <property type="term" value="F:structural constituent of ribosome"/>
    <property type="evidence" value="ECO:0007669"/>
    <property type="project" value="InterPro"/>
</dbReference>
<dbReference type="GO" id="GO:0006412">
    <property type="term" value="P:translation"/>
    <property type="evidence" value="ECO:0007669"/>
    <property type="project" value="UniProtKB-UniRule"/>
</dbReference>
<dbReference type="FunFam" id="3.30.1370.30:FF:000002">
    <property type="entry name" value="30S ribosomal protein S8"/>
    <property type="match status" value="1"/>
</dbReference>
<dbReference type="FunFam" id="3.30.1490.10:FF:000001">
    <property type="entry name" value="30S ribosomal protein S8"/>
    <property type="match status" value="1"/>
</dbReference>
<dbReference type="Gene3D" id="3.30.1370.30">
    <property type="match status" value="1"/>
</dbReference>
<dbReference type="Gene3D" id="3.30.1490.10">
    <property type="match status" value="1"/>
</dbReference>
<dbReference type="HAMAP" id="MF_01302_B">
    <property type="entry name" value="Ribosomal_uS8_B"/>
    <property type="match status" value="1"/>
</dbReference>
<dbReference type="InterPro" id="IPR000630">
    <property type="entry name" value="Ribosomal_uS8"/>
</dbReference>
<dbReference type="InterPro" id="IPR047863">
    <property type="entry name" value="Ribosomal_uS8_CS"/>
</dbReference>
<dbReference type="InterPro" id="IPR035987">
    <property type="entry name" value="Ribosomal_uS8_sf"/>
</dbReference>
<dbReference type="NCBIfam" id="NF001109">
    <property type="entry name" value="PRK00136.1"/>
    <property type="match status" value="1"/>
</dbReference>
<dbReference type="PANTHER" id="PTHR11758">
    <property type="entry name" value="40S RIBOSOMAL PROTEIN S15A"/>
    <property type="match status" value="1"/>
</dbReference>
<dbReference type="Pfam" id="PF00410">
    <property type="entry name" value="Ribosomal_S8"/>
    <property type="match status" value="1"/>
</dbReference>
<dbReference type="SUPFAM" id="SSF56047">
    <property type="entry name" value="Ribosomal protein S8"/>
    <property type="match status" value="1"/>
</dbReference>
<dbReference type="PROSITE" id="PS00053">
    <property type="entry name" value="RIBOSOMAL_S8"/>
    <property type="match status" value="1"/>
</dbReference>